<reference key="1">
    <citation type="journal article" date="2003" name="Proc. Natl. Acad. Sci. U.S.A.">
        <title>The complete genome sequence of the Arabidopsis and tomato pathogen Pseudomonas syringae pv. tomato DC3000.</title>
        <authorList>
            <person name="Buell C.R."/>
            <person name="Joardar V."/>
            <person name="Lindeberg M."/>
            <person name="Selengut J."/>
            <person name="Paulsen I.T."/>
            <person name="Gwinn M.L."/>
            <person name="Dodson R.J."/>
            <person name="DeBoy R.T."/>
            <person name="Durkin A.S."/>
            <person name="Kolonay J.F."/>
            <person name="Madupu R."/>
            <person name="Daugherty S.C."/>
            <person name="Brinkac L.M."/>
            <person name="Beanan M.J."/>
            <person name="Haft D.H."/>
            <person name="Nelson W.C."/>
            <person name="Davidsen T.M."/>
            <person name="Zafar N."/>
            <person name="Zhou L."/>
            <person name="Liu J."/>
            <person name="Yuan Q."/>
            <person name="Khouri H.M."/>
            <person name="Fedorova N.B."/>
            <person name="Tran B."/>
            <person name="Russell D."/>
            <person name="Berry K.J."/>
            <person name="Utterback T.R."/>
            <person name="Van Aken S.E."/>
            <person name="Feldblyum T.V."/>
            <person name="D'Ascenzo M."/>
            <person name="Deng W.-L."/>
            <person name="Ramos A.R."/>
            <person name="Alfano J.R."/>
            <person name="Cartinhour S."/>
            <person name="Chatterjee A.K."/>
            <person name="Delaney T.P."/>
            <person name="Lazarowitz S.G."/>
            <person name="Martin G.B."/>
            <person name="Schneider D.J."/>
            <person name="Tang X."/>
            <person name="Bender C.L."/>
            <person name="White O."/>
            <person name="Fraser C.M."/>
            <person name="Collmer A."/>
        </authorList>
    </citation>
    <scope>NUCLEOTIDE SEQUENCE [LARGE SCALE GENOMIC DNA]</scope>
    <source>
        <strain>ATCC BAA-871 / DC3000</strain>
    </source>
</reference>
<dbReference type="EC" id="4.2.1.33" evidence="1"/>
<dbReference type="EMBL" id="AE016853">
    <property type="protein sequence ID" value="AAO55690.1"/>
    <property type="molecule type" value="Genomic_DNA"/>
</dbReference>
<dbReference type="RefSeq" id="NP_791995.1">
    <property type="nucleotide sequence ID" value="NC_004578.1"/>
</dbReference>
<dbReference type="RefSeq" id="WP_007244781.1">
    <property type="nucleotide sequence ID" value="NC_004578.1"/>
</dbReference>
<dbReference type="SMR" id="Q884C2"/>
<dbReference type="STRING" id="223283.PSPTO_2173"/>
<dbReference type="GeneID" id="1183824"/>
<dbReference type="KEGG" id="pst:PSPTO_2173"/>
<dbReference type="PATRIC" id="fig|223283.9.peg.2204"/>
<dbReference type="eggNOG" id="COG0065">
    <property type="taxonomic scope" value="Bacteria"/>
</dbReference>
<dbReference type="HOGENOM" id="CLU_006714_3_4_6"/>
<dbReference type="OrthoDB" id="9802769at2"/>
<dbReference type="PhylomeDB" id="Q884C2"/>
<dbReference type="UniPathway" id="UPA00048">
    <property type="reaction ID" value="UER00071"/>
</dbReference>
<dbReference type="Proteomes" id="UP000002515">
    <property type="component" value="Chromosome"/>
</dbReference>
<dbReference type="GO" id="GO:0003861">
    <property type="term" value="F:3-isopropylmalate dehydratase activity"/>
    <property type="evidence" value="ECO:0007669"/>
    <property type="project" value="UniProtKB-UniRule"/>
</dbReference>
<dbReference type="GO" id="GO:0051539">
    <property type="term" value="F:4 iron, 4 sulfur cluster binding"/>
    <property type="evidence" value="ECO:0007669"/>
    <property type="project" value="UniProtKB-KW"/>
</dbReference>
<dbReference type="GO" id="GO:0046872">
    <property type="term" value="F:metal ion binding"/>
    <property type="evidence" value="ECO:0007669"/>
    <property type="project" value="UniProtKB-KW"/>
</dbReference>
<dbReference type="GO" id="GO:0009098">
    <property type="term" value="P:L-leucine biosynthetic process"/>
    <property type="evidence" value="ECO:0007669"/>
    <property type="project" value="UniProtKB-UniRule"/>
</dbReference>
<dbReference type="CDD" id="cd01583">
    <property type="entry name" value="IPMI"/>
    <property type="match status" value="1"/>
</dbReference>
<dbReference type="FunFam" id="3.30.499.10:FF:000007">
    <property type="entry name" value="3-isopropylmalate dehydratase large subunit"/>
    <property type="match status" value="1"/>
</dbReference>
<dbReference type="Gene3D" id="3.30.499.10">
    <property type="entry name" value="Aconitase, domain 3"/>
    <property type="match status" value="2"/>
</dbReference>
<dbReference type="HAMAP" id="MF_01026">
    <property type="entry name" value="LeuC_type1"/>
    <property type="match status" value="1"/>
</dbReference>
<dbReference type="InterPro" id="IPR004430">
    <property type="entry name" value="3-IsopropMal_deHydase_lsu"/>
</dbReference>
<dbReference type="InterPro" id="IPR015931">
    <property type="entry name" value="Acnase/IPM_dHydase_lsu_aba_1/3"/>
</dbReference>
<dbReference type="InterPro" id="IPR001030">
    <property type="entry name" value="Acoase/IPM_deHydtase_lsu_aba"/>
</dbReference>
<dbReference type="InterPro" id="IPR018136">
    <property type="entry name" value="Aconitase_4Fe-4S_BS"/>
</dbReference>
<dbReference type="InterPro" id="IPR036008">
    <property type="entry name" value="Aconitase_4Fe-4S_dom"/>
</dbReference>
<dbReference type="InterPro" id="IPR050067">
    <property type="entry name" value="IPM_dehydratase_rel_enz"/>
</dbReference>
<dbReference type="InterPro" id="IPR033941">
    <property type="entry name" value="IPMI_cat"/>
</dbReference>
<dbReference type="NCBIfam" id="TIGR00170">
    <property type="entry name" value="leuC"/>
    <property type="match status" value="1"/>
</dbReference>
<dbReference type="NCBIfam" id="NF004016">
    <property type="entry name" value="PRK05478.1"/>
    <property type="match status" value="1"/>
</dbReference>
<dbReference type="NCBIfam" id="NF009116">
    <property type="entry name" value="PRK12466.1"/>
    <property type="match status" value="1"/>
</dbReference>
<dbReference type="PANTHER" id="PTHR43822:SF9">
    <property type="entry name" value="3-ISOPROPYLMALATE DEHYDRATASE"/>
    <property type="match status" value="1"/>
</dbReference>
<dbReference type="PANTHER" id="PTHR43822">
    <property type="entry name" value="HOMOACONITASE, MITOCHONDRIAL-RELATED"/>
    <property type="match status" value="1"/>
</dbReference>
<dbReference type="Pfam" id="PF00330">
    <property type="entry name" value="Aconitase"/>
    <property type="match status" value="1"/>
</dbReference>
<dbReference type="PRINTS" id="PR00415">
    <property type="entry name" value="ACONITASE"/>
</dbReference>
<dbReference type="SUPFAM" id="SSF53732">
    <property type="entry name" value="Aconitase iron-sulfur domain"/>
    <property type="match status" value="1"/>
</dbReference>
<dbReference type="PROSITE" id="PS00450">
    <property type="entry name" value="ACONITASE_1"/>
    <property type="match status" value="1"/>
</dbReference>
<dbReference type="PROSITE" id="PS01244">
    <property type="entry name" value="ACONITASE_2"/>
    <property type="match status" value="1"/>
</dbReference>
<keyword id="KW-0004">4Fe-4S</keyword>
<keyword id="KW-0028">Amino-acid biosynthesis</keyword>
<keyword id="KW-0100">Branched-chain amino acid biosynthesis</keyword>
<keyword id="KW-0408">Iron</keyword>
<keyword id="KW-0411">Iron-sulfur</keyword>
<keyword id="KW-0432">Leucine biosynthesis</keyword>
<keyword id="KW-0456">Lyase</keyword>
<keyword id="KW-0479">Metal-binding</keyword>
<keyword id="KW-1185">Reference proteome</keyword>
<proteinExistence type="inferred from homology"/>
<organism>
    <name type="scientific">Pseudomonas syringae pv. tomato (strain ATCC BAA-871 / DC3000)</name>
    <dbReference type="NCBI Taxonomy" id="223283"/>
    <lineage>
        <taxon>Bacteria</taxon>
        <taxon>Pseudomonadati</taxon>
        <taxon>Pseudomonadota</taxon>
        <taxon>Gammaproteobacteria</taxon>
        <taxon>Pseudomonadales</taxon>
        <taxon>Pseudomonadaceae</taxon>
        <taxon>Pseudomonas</taxon>
    </lineage>
</organism>
<sequence length="475" mass="51075">MAGKTLYDKLWDSHLVKQRDDGSALIYIDRHIIHEVTSPQAFEGLRLARRKPWRIDSIIATPDHNVPTTSERKGGIEAIEDQVSRLQVQTLDDNCDEYGITEFKMNDPRQGIVHVIGPEQGATLPGMSVVCGDSHTSTHGAFGALAHGIGTSEVEHVLATQCLVAKKMKNMLVSVEGQLPFGVTAKDIVLAVIGKIGTAGGNGYAIEFAGSAIRDLSIEGRMTICNMSIEAGARVGMVATDEKTIEYVKGRPFAPKGAEWDLAVEAWQDLVSDADAVFDTVVKLDAAQIKPQVSWGTSPEMVLAVDQNVPDPAQEPDLVKRGSIERALKYMGLKANQPITDIQLDRVFIGSCTNSRIEDLRAAADVAKGRKVAATIKQAIVVPGSGLIKAQAEKEGLDKVFIDAGFEWREPGCSMCLAMNPDRLGSGEHCASTSNRNFEGRQGAGGRTHLVSPAMAAAAAVTGRFIDVRELRNPA</sequence>
<accession>Q884C2</accession>
<gene>
    <name evidence="1" type="primary">leuC</name>
    <name type="ordered locus">PSPTO_2173</name>
</gene>
<name>LEUC_PSESM</name>
<comment type="function">
    <text evidence="1">Catalyzes the isomerization between 2-isopropylmalate and 3-isopropylmalate, via the formation of 2-isopropylmaleate.</text>
</comment>
<comment type="catalytic activity">
    <reaction evidence="1">
        <text>(2R,3S)-3-isopropylmalate = (2S)-2-isopropylmalate</text>
        <dbReference type="Rhea" id="RHEA:32287"/>
        <dbReference type="ChEBI" id="CHEBI:1178"/>
        <dbReference type="ChEBI" id="CHEBI:35121"/>
        <dbReference type="EC" id="4.2.1.33"/>
    </reaction>
</comment>
<comment type="cofactor">
    <cofactor evidence="1">
        <name>[4Fe-4S] cluster</name>
        <dbReference type="ChEBI" id="CHEBI:49883"/>
    </cofactor>
    <text evidence="1">Binds 1 [4Fe-4S] cluster per subunit.</text>
</comment>
<comment type="pathway">
    <text evidence="1">Amino-acid biosynthesis; L-leucine biosynthesis; L-leucine from 3-methyl-2-oxobutanoate: step 2/4.</text>
</comment>
<comment type="subunit">
    <text evidence="1">Heterodimer of LeuC and LeuD.</text>
</comment>
<comment type="similarity">
    <text evidence="1">Belongs to the aconitase/IPM isomerase family. LeuC type 1 subfamily.</text>
</comment>
<evidence type="ECO:0000255" key="1">
    <source>
        <dbReference type="HAMAP-Rule" id="MF_01026"/>
    </source>
</evidence>
<protein>
    <recommendedName>
        <fullName evidence="1">3-isopropylmalate dehydratase large subunit</fullName>
        <ecNumber evidence="1">4.2.1.33</ecNumber>
    </recommendedName>
    <alternativeName>
        <fullName evidence="1">Alpha-IPM isomerase</fullName>
        <shortName evidence="1">IPMI</shortName>
    </alternativeName>
    <alternativeName>
        <fullName evidence="1">Isopropylmalate isomerase</fullName>
    </alternativeName>
</protein>
<feature type="chain" id="PRO_0000076789" description="3-isopropylmalate dehydratase large subunit">
    <location>
        <begin position="1"/>
        <end position="475"/>
    </location>
</feature>
<feature type="binding site" evidence="1">
    <location>
        <position position="352"/>
    </location>
    <ligand>
        <name>[4Fe-4S] cluster</name>
        <dbReference type="ChEBI" id="CHEBI:49883"/>
    </ligand>
</feature>
<feature type="binding site" evidence="1">
    <location>
        <position position="413"/>
    </location>
    <ligand>
        <name>[4Fe-4S] cluster</name>
        <dbReference type="ChEBI" id="CHEBI:49883"/>
    </ligand>
</feature>
<feature type="binding site" evidence="1">
    <location>
        <position position="416"/>
    </location>
    <ligand>
        <name>[4Fe-4S] cluster</name>
        <dbReference type="ChEBI" id="CHEBI:49883"/>
    </ligand>
</feature>